<gene>
    <name evidence="4" type="primary">glaR</name>
    <name type="synonym">csiR</name>
    <name type="synonym">gabC</name>
    <name type="synonym">ygaE</name>
    <name type="ordered locus">b2664</name>
    <name type="ordered locus">JW2639</name>
</gene>
<evidence type="ECO:0000255" key="1">
    <source>
        <dbReference type="PROSITE-ProRule" id="PRU00307"/>
    </source>
</evidence>
<evidence type="ECO:0000269" key="2">
    <source>
    </source>
</evidence>
<evidence type="ECO:0000269" key="3">
    <source>
    </source>
</evidence>
<evidence type="ECO:0000303" key="4">
    <source>
    </source>
</evidence>
<evidence type="ECO:0000305" key="5"/>
<evidence type="ECO:0000305" key="6">
    <source>
    </source>
</evidence>
<name>GLAR_ECOLI</name>
<proteinExistence type="evidence at protein level"/>
<accession>P37338</accession>
<accession>P76623</accession>
<accession>P77021</accession>
<reference key="1">
    <citation type="journal article" date="1997" name="DNA Res.">
        <title>Construction of a contiguous 874-kb sequence of the Escherichia coli-K12 genome corresponding to 50.0-68.8 min on the linkage map and analysis of its sequence features.</title>
        <authorList>
            <person name="Yamamoto Y."/>
            <person name="Aiba H."/>
            <person name="Baba T."/>
            <person name="Hayashi K."/>
            <person name="Inada T."/>
            <person name="Isono K."/>
            <person name="Itoh T."/>
            <person name="Kimura S."/>
            <person name="Kitagawa M."/>
            <person name="Makino K."/>
            <person name="Miki T."/>
            <person name="Mitsuhashi N."/>
            <person name="Mizobuchi K."/>
            <person name="Mori H."/>
            <person name="Nakade S."/>
            <person name="Nakamura Y."/>
            <person name="Nashimoto H."/>
            <person name="Oshima T."/>
            <person name="Oyama S."/>
            <person name="Saito N."/>
            <person name="Sampei G."/>
            <person name="Satoh Y."/>
            <person name="Sivasundaram S."/>
            <person name="Tagami H."/>
            <person name="Takahashi H."/>
            <person name="Takeda J."/>
            <person name="Takemoto K."/>
            <person name="Uehara K."/>
            <person name="Wada C."/>
            <person name="Yamagata S."/>
            <person name="Horiuchi T."/>
        </authorList>
    </citation>
    <scope>NUCLEOTIDE SEQUENCE [LARGE SCALE GENOMIC DNA]</scope>
    <source>
        <strain>K12 / W3110 / ATCC 27325 / DSM 5911</strain>
    </source>
</reference>
<reference key="2">
    <citation type="journal article" date="1997" name="Science">
        <title>The complete genome sequence of Escherichia coli K-12.</title>
        <authorList>
            <person name="Blattner F.R."/>
            <person name="Plunkett G. III"/>
            <person name="Bloch C.A."/>
            <person name="Perna N.T."/>
            <person name="Burland V."/>
            <person name="Riley M."/>
            <person name="Collado-Vides J."/>
            <person name="Glasner J.D."/>
            <person name="Rode C.K."/>
            <person name="Mayhew G.F."/>
            <person name="Gregor J."/>
            <person name="Davis N.W."/>
            <person name="Kirkpatrick H.A."/>
            <person name="Goeden M.A."/>
            <person name="Rose D.J."/>
            <person name="Mau B."/>
            <person name="Shao Y."/>
        </authorList>
    </citation>
    <scope>NUCLEOTIDE SEQUENCE [LARGE SCALE GENOMIC DNA]</scope>
    <source>
        <strain>K12 / MG1655 / ATCC 47076</strain>
    </source>
</reference>
<reference key="3">
    <citation type="journal article" date="2006" name="Mol. Syst. Biol.">
        <title>Highly accurate genome sequences of Escherichia coli K-12 strains MG1655 and W3110.</title>
        <authorList>
            <person name="Hayashi K."/>
            <person name="Morooka N."/>
            <person name="Yamamoto Y."/>
            <person name="Fujita K."/>
            <person name="Isono K."/>
            <person name="Choi S."/>
            <person name="Ohtsubo E."/>
            <person name="Baba T."/>
            <person name="Wanner B.L."/>
            <person name="Mori H."/>
            <person name="Horiuchi T."/>
        </authorList>
    </citation>
    <scope>NUCLEOTIDE SEQUENCE [LARGE SCALE GENOMIC DNA]</scope>
    <source>
        <strain>K12 / W3110 / ATCC 27325 / DSM 5911</strain>
    </source>
</reference>
<reference key="4">
    <citation type="journal article" date="1993" name="Arch. Microbiol.">
        <title>Molecular organization of the Escherichia coli gab cluster: nucleotide sequence of the structural genes gabD and gabP and expression of the GABA permease gene.</title>
        <authorList>
            <person name="Niegemann E."/>
            <person name="Schulz A."/>
            <person name="Bartsch K."/>
        </authorList>
    </citation>
    <scope>NUCLEOTIDE SEQUENCE [GENOMIC DNA] OF 1-114</scope>
    <source>
        <strain>K12 / JM103 / ATCC 39403 / DSM 2829 / KCTC 1112 / NCIMB 12044</strain>
    </source>
</reference>
<reference key="5">
    <citation type="journal article" date="1994" name="Nucleic Acids Res.">
        <title>Intrinsic and extrinsic approaches for detecting genes in a bacterial genome.</title>
        <authorList>
            <person name="Borodovsky M."/>
            <person name="Rudd K.E."/>
            <person name="Koonin E.V."/>
        </authorList>
    </citation>
    <scope>IDENTIFICATION</scope>
</reference>
<reference key="6">
    <citation type="journal article" date="2004" name="Mol. Microbiol.">
        <title>Multiple stress signal integration in the regulation of the complex sigma S-dependent csiD-ygaF-gabDTP operon in Escherichia coli.</title>
        <authorList>
            <person name="Metzner M."/>
            <person name="Germer J."/>
            <person name="Hengge R."/>
        </authorList>
    </citation>
    <scope>FUNCTION</scope>
    <source>
        <strain>K12 / MC4100 / ATCC 35695 / DSM 6574</strain>
    </source>
</reference>
<reference key="7">
    <citation type="journal article" date="2018" name="Nat. Commun.">
        <title>Widespread bacterial lysine degradation proceeding via glutarate and L-2-hydroxyglutarate.</title>
        <authorList>
            <person name="Knorr S."/>
            <person name="Sinn M."/>
            <person name="Galetskiy D."/>
            <person name="Williams R.M."/>
            <person name="Wang C."/>
            <person name="Mueller N."/>
            <person name="Mayans O."/>
            <person name="Schleheck D."/>
            <person name="Hartig J.S."/>
        </authorList>
    </citation>
    <scope>FUNCTION</scope>
    <scope>ACTIVITY REGULATION</scope>
    <scope>DNA-BINDING</scope>
    <source>
        <strain>K12 / BW25113</strain>
    </source>
</reference>
<comment type="function">
    <text evidence="2 3">Negatively regulates the expression of the glaH-lhgD-gabDTP operon in a temporal manner during entry into stationary phase or during the first few hours of carbon starvation (PubMed:14731280, PubMed:30498244). Thereby is involved in the regulation of a L-lysine degradation pathway that proceeds via cadaverine, glutarate and L-2-hydroxyglutarate (PubMed:30498244). Binds to two primary and two secondary sites in the promoter region of the glaH operon with the consensus sequences TTGTN5TTTT and ATGTN5TTTT of the primary sites, each separated by six nucleotides (PubMed:30498244).</text>
</comment>
<comment type="activity regulation">
    <text evidence="3">The repressive effect at the glaH promoter site is specifically relieved upon glutarate binding.</text>
</comment>
<comment type="subcellular location">
    <subcellularLocation>
        <location evidence="5">Cytoplasm</location>
    </subcellularLocation>
</comment>
<keyword id="KW-0963">Cytoplasm</keyword>
<keyword id="KW-0238">DNA-binding</keyword>
<keyword id="KW-1185">Reference proteome</keyword>
<keyword id="KW-0678">Repressor</keyword>
<keyword id="KW-0804">Transcription</keyword>
<keyword id="KW-0805">Transcription regulation</keyword>
<organism>
    <name type="scientific">Escherichia coli (strain K12)</name>
    <dbReference type="NCBI Taxonomy" id="83333"/>
    <lineage>
        <taxon>Bacteria</taxon>
        <taxon>Pseudomonadati</taxon>
        <taxon>Pseudomonadota</taxon>
        <taxon>Gammaproteobacteria</taxon>
        <taxon>Enterobacterales</taxon>
        <taxon>Enterobacteriaceae</taxon>
        <taxon>Escherichia</taxon>
    </lineage>
</organism>
<sequence>MTITSLDGYRWLKNDIIRGNFQPDEKLRMSLLTSRYALGVGPLREALSQLVAERLVTVVNQKGYRVASMSEQELLDIFDARANMEAMLVSLAIARGGDEWEADVLAKAHLLSKLEACDASEKMLDEWDLRHQAFHTAIVAGCGSHYLLQMRERLFDLAARYRFIWLRRTVLSVEMLEDKHDQHQTLTAAVLARDTARASELMRQHLLTPIPIIQQAMAGN</sequence>
<dbReference type="EMBL" id="U00096">
    <property type="protein sequence ID" value="AAC75711.2"/>
    <property type="molecule type" value="Genomic_DNA"/>
</dbReference>
<dbReference type="EMBL" id="AP009048">
    <property type="protein sequence ID" value="BAA16527.1"/>
    <property type="molecule type" value="Genomic_DNA"/>
</dbReference>
<dbReference type="EMBL" id="M88334">
    <property type="status" value="NOT_ANNOTATED_CDS"/>
    <property type="molecule type" value="Genomic_DNA"/>
</dbReference>
<dbReference type="RefSeq" id="NP_417150.4">
    <property type="nucleotide sequence ID" value="NC_000913.3"/>
</dbReference>
<dbReference type="RefSeq" id="WP_000156811.1">
    <property type="nucleotide sequence ID" value="NZ_STEB01000042.1"/>
</dbReference>
<dbReference type="SMR" id="P37338"/>
<dbReference type="BioGRID" id="4262265">
    <property type="interactions" value="77"/>
</dbReference>
<dbReference type="DIP" id="DIP-12095N"/>
<dbReference type="FunCoup" id="P37338">
    <property type="interactions" value="160"/>
</dbReference>
<dbReference type="IntAct" id="P37338">
    <property type="interactions" value="4"/>
</dbReference>
<dbReference type="STRING" id="511145.b2664"/>
<dbReference type="jPOST" id="P37338"/>
<dbReference type="PaxDb" id="511145-b2664"/>
<dbReference type="EnsemblBacteria" id="AAC75711">
    <property type="protein sequence ID" value="AAC75711"/>
    <property type="gene ID" value="b2664"/>
</dbReference>
<dbReference type="GeneID" id="93779348"/>
<dbReference type="GeneID" id="948055"/>
<dbReference type="KEGG" id="ecj:JW2639"/>
<dbReference type="KEGG" id="eco:b2664"/>
<dbReference type="KEGG" id="ecoc:C3026_14685"/>
<dbReference type="PATRIC" id="fig|1411691.4.peg.4077"/>
<dbReference type="EchoBASE" id="EB2287"/>
<dbReference type="eggNOG" id="COG1802">
    <property type="taxonomic scope" value="Bacteria"/>
</dbReference>
<dbReference type="HOGENOM" id="CLU_017584_5_3_6"/>
<dbReference type="InParanoid" id="P37338"/>
<dbReference type="OMA" id="HEMIMKL"/>
<dbReference type="OrthoDB" id="9799812at2"/>
<dbReference type="PhylomeDB" id="P37338"/>
<dbReference type="BioCyc" id="EcoCyc:EG12386-MONOMER"/>
<dbReference type="PRO" id="PR:P37338"/>
<dbReference type="Proteomes" id="UP000000625">
    <property type="component" value="Chromosome"/>
</dbReference>
<dbReference type="GO" id="GO:0005737">
    <property type="term" value="C:cytoplasm"/>
    <property type="evidence" value="ECO:0007669"/>
    <property type="project" value="UniProtKB-SubCell"/>
</dbReference>
<dbReference type="GO" id="GO:0003677">
    <property type="term" value="F:DNA binding"/>
    <property type="evidence" value="ECO:0007669"/>
    <property type="project" value="UniProtKB-KW"/>
</dbReference>
<dbReference type="GO" id="GO:0003700">
    <property type="term" value="F:DNA-binding transcription factor activity"/>
    <property type="evidence" value="ECO:0007669"/>
    <property type="project" value="InterPro"/>
</dbReference>
<dbReference type="GO" id="GO:2000143">
    <property type="term" value="P:negative regulation of DNA-templated transcription initiation"/>
    <property type="evidence" value="ECO:0000314"/>
    <property type="project" value="EcoCyc"/>
</dbReference>
<dbReference type="GO" id="GO:0006355">
    <property type="term" value="P:regulation of DNA-templated transcription"/>
    <property type="evidence" value="ECO:0000315"/>
    <property type="project" value="EcoCyc"/>
</dbReference>
<dbReference type="FunFam" id="1.10.10.10:FF:000156">
    <property type="entry name" value="DNA-binding transcriptional regulator CsiR"/>
    <property type="match status" value="1"/>
</dbReference>
<dbReference type="FunFam" id="1.20.120.530:FF:000007">
    <property type="entry name" value="DNA-binding transcriptional regulator CsiR"/>
    <property type="match status" value="1"/>
</dbReference>
<dbReference type="Gene3D" id="1.20.120.530">
    <property type="entry name" value="GntR ligand-binding domain-like"/>
    <property type="match status" value="1"/>
</dbReference>
<dbReference type="Gene3D" id="1.10.10.10">
    <property type="entry name" value="Winged helix-like DNA-binding domain superfamily/Winged helix DNA-binding domain"/>
    <property type="match status" value="1"/>
</dbReference>
<dbReference type="InterPro" id="IPR011711">
    <property type="entry name" value="GntR_C"/>
</dbReference>
<dbReference type="InterPro" id="IPR008920">
    <property type="entry name" value="TF_FadR/GntR_C"/>
</dbReference>
<dbReference type="InterPro" id="IPR000524">
    <property type="entry name" value="Tscrpt_reg_HTH_GntR"/>
</dbReference>
<dbReference type="InterPro" id="IPR036388">
    <property type="entry name" value="WH-like_DNA-bd_sf"/>
</dbReference>
<dbReference type="InterPro" id="IPR036390">
    <property type="entry name" value="WH_DNA-bd_sf"/>
</dbReference>
<dbReference type="NCBIfam" id="NF008576">
    <property type="entry name" value="PRK11534.1"/>
    <property type="match status" value="1"/>
</dbReference>
<dbReference type="PANTHER" id="PTHR43537:SF20">
    <property type="entry name" value="HTH-TYPE TRANSCRIPTIONAL REPRESSOR GLAR"/>
    <property type="match status" value="1"/>
</dbReference>
<dbReference type="PANTHER" id="PTHR43537">
    <property type="entry name" value="TRANSCRIPTIONAL REGULATOR, GNTR FAMILY"/>
    <property type="match status" value="1"/>
</dbReference>
<dbReference type="Pfam" id="PF07729">
    <property type="entry name" value="FCD"/>
    <property type="match status" value="1"/>
</dbReference>
<dbReference type="Pfam" id="PF00392">
    <property type="entry name" value="GntR"/>
    <property type="match status" value="1"/>
</dbReference>
<dbReference type="SMART" id="SM00895">
    <property type="entry name" value="FCD"/>
    <property type="match status" value="1"/>
</dbReference>
<dbReference type="SMART" id="SM00345">
    <property type="entry name" value="HTH_GNTR"/>
    <property type="match status" value="1"/>
</dbReference>
<dbReference type="SUPFAM" id="SSF48008">
    <property type="entry name" value="GntR ligand-binding domain-like"/>
    <property type="match status" value="1"/>
</dbReference>
<dbReference type="SUPFAM" id="SSF46785">
    <property type="entry name" value="Winged helix' DNA-binding domain"/>
    <property type="match status" value="1"/>
</dbReference>
<dbReference type="PROSITE" id="PS50949">
    <property type="entry name" value="HTH_GNTR"/>
    <property type="match status" value="1"/>
</dbReference>
<feature type="chain" id="PRO_0000050680" description="HTH-type transcriptional repressor GlaR">
    <location>
        <begin position="1"/>
        <end position="220"/>
    </location>
</feature>
<feature type="domain" description="HTH gntR-type" evidence="1">
    <location>
        <begin position="1"/>
        <end position="69"/>
    </location>
</feature>
<feature type="DNA-binding region" description="H-T-H motif" evidence="1">
    <location>
        <begin position="29"/>
        <end position="48"/>
    </location>
</feature>
<protein>
    <recommendedName>
        <fullName>HTH-type transcriptional repressor GlaR</fullName>
    </recommendedName>
    <alternativeName>
        <fullName>Carbon starvation induced regulator</fullName>
    </alternativeName>
    <alternativeName>
        <fullName evidence="6">GlaH operon repressor</fullName>
    </alternativeName>
</protein>